<evidence type="ECO:0000255" key="1">
    <source>
        <dbReference type="HAMAP-Rule" id="MF_01369"/>
    </source>
</evidence>
<evidence type="ECO:0000305" key="2"/>
<name>RL23_ACIBT</name>
<feature type="chain" id="PRO_1000068032" description="Large ribosomal subunit protein uL23">
    <location>
        <begin position="1"/>
        <end position="106"/>
    </location>
</feature>
<accession>A3M981</accession>
<comment type="function">
    <text evidence="1">One of the early assembly proteins it binds 23S rRNA. One of the proteins that surrounds the polypeptide exit tunnel on the outside of the ribosome. Forms the main docking site for trigger factor binding to the ribosome.</text>
</comment>
<comment type="subunit">
    <text evidence="1">Part of the 50S ribosomal subunit. Contacts protein L29, and trigger factor when it is bound to the ribosome.</text>
</comment>
<comment type="similarity">
    <text evidence="1">Belongs to the universal ribosomal protein uL23 family.</text>
</comment>
<proteinExistence type="inferred from homology"/>
<protein>
    <recommendedName>
        <fullName evidence="1">Large ribosomal subunit protein uL23</fullName>
    </recommendedName>
    <alternativeName>
        <fullName evidence="2">50S ribosomal protein L23</fullName>
    </alternativeName>
</protein>
<organism>
    <name type="scientific">Acinetobacter baumannii (strain ATCC 17978 / DSM 105126 / CIP 53.77 / LMG 1025 / NCDC KC755 / 5377)</name>
    <dbReference type="NCBI Taxonomy" id="400667"/>
    <lineage>
        <taxon>Bacteria</taxon>
        <taxon>Pseudomonadati</taxon>
        <taxon>Pseudomonadota</taxon>
        <taxon>Gammaproteobacteria</taxon>
        <taxon>Moraxellales</taxon>
        <taxon>Moraxellaceae</taxon>
        <taxon>Acinetobacter</taxon>
        <taxon>Acinetobacter calcoaceticus/baumannii complex</taxon>
    </lineage>
</organism>
<sequence length="106" mass="11588">MNNERIYQVLKGPVFSEKAQVLGDTAGVQVFKVDINATKLEIKKAVEKLFGVEVVKVNTTITKGKTKRFGRTLGRRSDVKKAYVTLKAGQDVEMADLGDTAESAAE</sequence>
<keyword id="KW-0687">Ribonucleoprotein</keyword>
<keyword id="KW-0689">Ribosomal protein</keyword>
<keyword id="KW-0694">RNA-binding</keyword>
<keyword id="KW-0699">rRNA-binding</keyword>
<dbReference type="EMBL" id="CP000521">
    <property type="protein sequence ID" value="ABO13475.1"/>
    <property type="molecule type" value="Genomic_DNA"/>
</dbReference>
<dbReference type="RefSeq" id="WP_001058538.1">
    <property type="nucleotide sequence ID" value="NZ_CP053098.1"/>
</dbReference>
<dbReference type="SMR" id="A3M981"/>
<dbReference type="GeneID" id="92895315"/>
<dbReference type="KEGG" id="acb:A1S_3078"/>
<dbReference type="HOGENOM" id="CLU_037562_3_1_6"/>
<dbReference type="GO" id="GO:1990904">
    <property type="term" value="C:ribonucleoprotein complex"/>
    <property type="evidence" value="ECO:0007669"/>
    <property type="project" value="UniProtKB-KW"/>
</dbReference>
<dbReference type="GO" id="GO:0005840">
    <property type="term" value="C:ribosome"/>
    <property type="evidence" value="ECO:0007669"/>
    <property type="project" value="UniProtKB-KW"/>
</dbReference>
<dbReference type="GO" id="GO:0019843">
    <property type="term" value="F:rRNA binding"/>
    <property type="evidence" value="ECO:0007669"/>
    <property type="project" value="UniProtKB-UniRule"/>
</dbReference>
<dbReference type="GO" id="GO:0003735">
    <property type="term" value="F:structural constituent of ribosome"/>
    <property type="evidence" value="ECO:0007669"/>
    <property type="project" value="InterPro"/>
</dbReference>
<dbReference type="GO" id="GO:0006412">
    <property type="term" value="P:translation"/>
    <property type="evidence" value="ECO:0007669"/>
    <property type="project" value="UniProtKB-UniRule"/>
</dbReference>
<dbReference type="FunFam" id="3.30.70.330:FF:000001">
    <property type="entry name" value="50S ribosomal protein L23"/>
    <property type="match status" value="1"/>
</dbReference>
<dbReference type="Gene3D" id="3.30.70.330">
    <property type="match status" value="1"/>
</dbReference>
<dbReference type="HAMAP" id="MF_01369_B">
    <property type="entry name" value="Ribosomal_uL23_B"/>
    <property type="match status" value="1"/>
</dbReference>
<dbReference type="InterPro" id="IPR012677">
    <property type="entry name" value="Nucleotide-bd_a/b_plait_sf"/>
</dbReference>
<dbReference type="InterPro" id="IPR013025">
    <property type="entry name" value="Ribosomal_uL23-like"/>
</dbReference>
<dbReference type="InterPro" id="IPR012678">
    <property type="entry name" value="Ribosomal_uL23/eL15/eS24_sf"/>
</dbReference>
<dbReference type="NCBIfam" id="NF004359">
    <property type="entry name" value="PRK05738.1-3"/>
    <property type="match status" value="1"/>
</dbReference>
<dbReference type="NCBIfam" id="NF004363">
    <property type="entry name" value="PRK05738.2-4"/>
    <property type="match status" value="1"/>
</dbReference>
<dbReference type="PANTHER" id="PTHR11620">
    <property type="entry name" value="60S RIBOSOMAL PROTEIN L23A"/>
    <property type="match status" value="1"/>
</dbReference>
<dbReference type="Pfam" id="PF00276">
    <property type="entry name" value="Ribosomal_L23"/>
    <property type="match status" value="1"/>
</dbReference>
<dbReference type="SUPFAM" id="SSF54189">
    <property type="entry name" value="Ribosomal proteins S24e, L23 and L15e"/>
    <property type="match status" value="1"/>
</dbReference>
<gene>
    <name evidence="1" type="primary">rplW</name>
    <name type="ordered locus">A1S_3078</name>
</gene>
<reference key="1">
    <citation type="journal article" date="2007" name="Genes Dev.">
        <title>New insights into Acinetobacter baumannii pathogenesis revealed by high-density pyrosequencing and transposon mutagenesis.</title>
        <authorList>
            <person name="Smith M.G."/>
            <person name="Gianoulis T.A."/>
            <person name="Pukatzki S."/>
            <person name="Mekalanos J.J."/>
            <person name="Ornston L.N."/>
            <person name="Gerstein M."/>
            <person name="Snyder M."/>
        </authorList>
    </citation>
    <scope>NUCLEOTIDE SEQUENCE [LARGE SCALE GENOMIC DNA]</scope>
    <source>
        <strain>ATCC 17978 / DSM 105126 / CIP 53.77 / LMG 1025 / NCDC KC755 / 5377</strain>
    </source>
</reference>